<evidence type="ECO:0000250" key="1"/>
<evidence type="ECO:0000255" key="2"/>
<evidence type="ECO:0000255" key="3">
    <source>
        <dbReference type="PROSITE-ProRule" id="PRU00526"/>
    </source>
</evidence>
<evidence type="ECO:0000256" key="4">
    <source>
        <dbReference type="SAM" id="MobiDB-lite"/>
    </source>
</evidence>
<evidence type="ECO:0000305" key="5"/>
<reference key="1">
    <citation type="journal article" date="2005" name="Science">
        <title>The genome of the basidiomycetous yeast and human pathogen Cryptococcus neoformans.</title>
        <authorList>
            <person name="Loftus B.J."/>
            <person name="Fung E."/>
            <person name="Roncaglia P."/>
            <person name="Rowley D."/>
            <person name="Amedeo P."/>
            <person name="Bruno D."/>
            <person name="Vamathevan J."/>
            <person name="Miranda M."/>
            <person name="Anderson I.J."/>
            <person name="Fraser J.A."/>
            <person name="Allen J.E."/>
            <person name="Bosdet I.E."/>
            <person name="Brent M.R."/>
            <person name="Chiu R."/>
            <person name="Doering T.L."/>
            <person name="Donlin M.J."/>
            <person name="D'Souza C.A."/>
            <person name="Fox D.S."/>
            <person name="Grinberg V."/>
            <person name="Fu J."/>
            <person name="Fukushima M."/>
            <person name="Haas B.J."/>
            <person name="Huang J.C."/>
            <person name="Janbon G."/>
            <person name="Jones S.J.M."/>
            <person name="Koo H.L."/>
            <person name="Krzywinski M.I."/>
            <person name="Kwon-Chung K.J."/>
            <person name="Lengeler K.B."/>
            <person name="Maiti R."/>
            <person name="Marra M.A."/>
            <person name="Marra R.E."/>
            <person name="Mathewson C.A."/>
            <person name="Mitchell T.G."/>
            <person name="Pertea M."/>
            <person name="Riggs F.R."/>
            <person name="Salzberg S.L."/>
            <person name="Schein J.E."/>
            <person name="Shvartsbeyn A."/>
            <person name="Shin H."/>
            <person name="Shumway M."/>
            <person name="Specht C.A."/>
            <person name="Suh B.B."/>
            <person name="Tenney A."/>
            <person name="Utterback T.R."/>
            <person name="Wickes B.L."/>
            <person name="Wortman J.R."/>
            <person name="Wye N.H."/>
            <person name="Kronstad J.W."/>
            <person name="Lodge J.K."/>
            <person name="Heitman J."/>
            <person name="Davis R.W."/>
            <person name="Fraser C.M."/>
            <person name="Hyman R.W."/>
        </authorList>
    </citation>
    <scope>NUCLEOTIDE SEQUENCE [LARGE SCALE GENOMIC DNA]</scope>
    <source>
        <strain>JEC21 / ATCC MYA-565</strain>
    </source>
</reference>
<name>BRO1_CRYNJ</name>
<comment type="function">
    <text evidence="1">Involved in concentration and sorting of cargo proteins of the multivesicular body (MVB) for incorporation into intralumenal vesicles.</text>
</comment>
<comment type="subcellular location">
    <subcellularLocation>
        <location evidence="1">Cytoplasm</location>
    </subcellularLocation>
    <subcellularLocation>
        <location evidence="1">Endosome</location>
    </subcellularLocation>
</comment>
<comment type="similarity">
    <text evidence="5">Belongs to the BRO1 family.</text>
</comment>
<keyword id="KW-0175">Coiled coil</keyword>
<keyword id="KW-0963">Cytoplasm</keyword>
<keyword id="KW-0967">Endosome</keyword>
<keyword id="KW-0653">Protein transport</keyword>
<keyword id="KW-1185">Reference proteome</keyword>
<keyword id="KW-0813">Transport</keyword>
<proteinExistence type="inferred from homology"/>
<feature type="chain" id="PRO_0000218863" description="Vacuolar protein-sorting protein BRO1">
    <location>
        <begin position="1"/>
        <end position="957"/>
    </location>
</feature>
<feature type="domain" description="BRO1" evidence="3">
    <location>
        <begin position="6"/>
        <end position="406"/>
    </location>
</feature>
<feature type="region of interest" description="Disordered" evidence="4">
    <location>
        <begin position="751"/>
        <end position="779"/>
    </location>
</feature>
<feature type="region of interest" description="Disordered" evidence="4">
    <location>
        <begin position="795"/>
        <end position="957"/>
    </location>
</feature>
<feature type="coiled-coil region" evidence="2">
    <location>
        <begin position="449"/>
        <end position="493"/>
    </location>
</feature>
<feature type="coiled-coil region" evidence="2">
    <location>
        <begin position="585"/>
        <end position="626"/>
    </location>
</feature>
<feature type="compositionally biased region" description="Basic and acidic residues" evidence="4">
    <location>
        <begin position="751"/>
        <end position="766"/>
    </location>
</feature>
<feature type="compositionally biased region" description="Pro residues" evidence="4">
    <location>
        <begin position="826"/>
        <end position="835"/>
    </location>
</feature>
<feature type="compositionally biased region" description="Polar residues" evidence="4">
    <location>
        <begin position="851"/>
        <end position="871"/>
    </location>
</feature>
<feature type="compositionally biased region" description="Pro residues" evidence="4">
    <location>
        <begin position="879"/>
        <end position="890"/>
    </location>
</feature>
<feature type="compositionally biased region" description="Pro residues" evidence="4">
    <location>
        <begin position="912"/>
        <end position="925"/>
    </location>
</feature>
<feature type="compositionally biased region" description="Low complexity" evidence="4">
    <location>
        <begin position="926"/>
        <end position="944"/>
    </location>
</feature>
<feature type="compositionally biased region" description="Gly residues" evidence="4">
    <location>
        <begin position="945"/>
        <end position="957"/>
    </location>
</feature>
<accession>P0CM44</accession>
<accession>Q55PE5</accession>
<accession>Q5KE13</accession>
<sequence>MSVQSPLIAVPRKTTTDVDWATPIRHVIAASYGEDPNSYAEECAVLQRCRQDAVRGAGNDQTARDLLYKYFGQLELLELRFAEIKVSFPWNDAFTDKLTTQTSLAFEKASIIHLISSILSSLAQSASRSDPEGLKRAYYNTRATAGMLTYINENFLHAPSTDLSREVVHLLIGIMMAQAAEIFTEKLVEEKKSASLVARSANQTASMYTSVVDEMKEFQGKGVFDRNWLYVLQIKAKLFGSLAQYYKATSDSAAGKHGTALVRLKIANSLIQDAQKQASSFIYTFVAASTPSLPHDAANALNEIVKAHATVCGEAKEQAVKDNDLIYHEVLPSEASLPAIEKLPPAAPITIQDVYGNQEVTKLIGPDIFLRLVPLAVHESASVYSEEKAKLVRAEVDKVELAEGEIQAGLDHLNLPEEIDRWRQFLEGDTNDDVPLSQQLKSLVDSVGDVRQVENDLGRLDGERAACERELRELNGALDAESRECERMRAKYTPNFTQSPSGPQTANLRSNLSANLSALSSASTSDAHLQSLWQSIQPSISLLSSGPSNLERAARDITEGNPQKIDKTVSLLDLDDEEVDRKALGQEEKDALRKAVDDGREKLDRLKKIRAERDEVLRDLKEKIQTDDVSNLLLLNRRSQNVEPQLFASELEKFRPYQTRLAAAVSASRSILQELDMLVAQVHKGTGFREILRKEKDRQRIIRDWEKRLIEAGESYAEIRAGLGKGLSYYDSLRRVIEDLRMEVQRFTNSREQERRNMVSDIETRQRLGGTSPSTGGVVANRGLEERLAALKMEAPPQPPRLGTTSTPNLPPPPGRGSSNVTSSYLPPPPPPKPQSNPYDFSTLAGFGSFATPSVSSPQHVYPSQPQQAYNQQSYIPPQQNPYYPPPPSRPTYASPPFAPQQPPMQSGHSPYAPPPGHAPQPQQPQYPSSQNQQQRQGYKYPGYGQQGGYGGGYGQY</sequence>
<protein>
    <recommendedName>
        <fullName>Vacuolar protein-sorting protein BRO1</fullName>
    </recommendedName>
    <alternativeName>
        <fullName>BRO domain-containing protein 1</fullName>
    </alternativeName>
</protein>
<dbReference type="EMBL" id="AE017347">
    <property type="protein sequence ID" value="AAW44609.1"/>
    <property type="molecule type" value="Genomic_DNA"/>
</dbReference>
<dbReference type="RefSeq" id="XP_571916.1">
    <property type="nucleotide sequence ID" value="XM_571916.1"/>
</dbReference>
<dbReference type="SMR" id="P0CM44"/>
<dbReference type="FunCoup" id="P0CM44">
    <property type="interactions" value="344"/>
</dbReference>
<dbReference type="STRING" id="214684.P0CM44"/>
<dbReference type="PaxDb" id="214684-P0CM44"/>
<dbReference type="EnsemblFungi" id="AAW44609">
    <property type="protein sequence ID" value="AAW44609"/>
    <property type="gene ID" value="CNG02100"/>
</dbReference>
<dbReference type="GeneID" id="3258531"/>
<dbReference type="KEGG" id="cne:CNG02100"/>
<dbReference type="VEuPathDB" id="FungiDB:CNG02100"/>
<dbReference type="eggNOG" id="KOG2220">
    <property type="taxonomic scope" value="Eukaryota"/>
</dbReference>
<dbReference type="HOGENOM" id="CLU_003661_0_0_1"/>
<dbReference type="InParanoid" id="P0CM44"/>
<dbReference type="OMA" id="CHAANQS"/>
<dbReference type="OrthoDB" id="2141925at2759"/>
<dbReference type="Proteomes" id="UP000002149">
    <property type="component" value="Chromosome 7"/>
</dbReference>
<dbReference type="GO" id="GO:0005768">
    <property type="term" value="C:endosome"/>
    <property type="evidence" value="ECO:0000318"/>
    <property type="project" value="GO_Central"/>
</dbReference>
<dbReference type="GO" id="GO:0043328">
    <property type="term" value="P:protein transport to vacuole involved in ubiquitin-dependent protein catabolic process via the multivesicular body sorting pathway"/>
    <property type="evidence" value="ECO:0000318"/>
    <property type="project" value="GO_Central"/>
</dbReference>
<dbReference type="CDD" id="cd09242">
    <property type="entry name" value="BRO1_ScBro1_like"/>
    <property type="match status" value="1"/>
</dbReference>
<dbReference type="CDD" id="cd09237">
    <property type="entry name" value="V_ScBro1_like"/>
    <property type="match status" value="1"/>
</dbReference>
<dbReference type="Gene3D" id="1.20.120.560">
    <property type="entry name" value="alix/aip1 in complex with the ypdl late domain"/>
    <property type="match status" value="1"/>
</dbReference>
<dbReference type="Gene3D" id="1.20.140.50">
    <property type="entry name" value="alix/aip1 like domains"/>
    <property type="match status" value="1"/>
</dbReference>
<dbReference type="Gene3D" id="1.25.40.280">
    <property type="entry name" value="alix/aip1 like domains"/>
    <property type="match status" value="1"/>
</dbReference>
<dbReference type="InterPro" id="IPR025304">
    <property type="entry name" value="ALIX_V_dom"/>
</dbReference>
<dbReference type="InterPro" id="IPR004328">
    <property type="entry name" value="BRO1_dom"/>
</dbReference>
<dbReference type="InterPro" id="IPR038499">
    <property type="entry name" value="BRO1_sf"/>
</dbReference>
<dbReference type="PANTHER" id="PTHR23030">
    <property type="entry name" value="PCD6 INTERACTING PROTEIN-RELATED"/>
    <property type="match status" value="1"/>
</dbReference>
<dbReference type="PANTHER" id="PTHR23030:SF30">
    <property type="entry name" value="TYROSINE-PROTEIN PHOSPHATASE NON-RECEPTOR TYPE 23"/>
    <property type="match status" value="1"/>
</dbReference>
<dbReference type="Pfam" id="PF13949">
    <property type="entry name" value="ALIX_LYPXL_bnd"/>
    <property type="match status" value="1"/>
</dbReference>
<dbReference type="Pfam" id="PF03097">
    <property type="entry name" value="BRO1"/>
    <property type="match status" value="1"/>
</dbReference>
<dbReference type="SMART" id="SM01041">
    <property type="entry name" value="BRO1"/>
    <property type="match status" value="1"/>
</dbReference>
<dbReference type="PROSITE" id="PS51180">
    <property type="entry name" value="BRO1"/>
    <property type="match status" value="1"/>
</dbReference>
<gene>
    <name type="primary">BRO1</name>
    <name type="ordered locus">CNG02100</name>
</gene>
<organism>
    <name type="scientific">Cryptococcus neoformans var. neoformans serotype D (strain JEC21 / ATCC MYA-565)</name>
    <name type="common">Filobasidiella neoformans</name>
    <dbReference type="NCBI Taxonomy" id="214684"/>
    <lineage>
        <taxon>Eukaryota</taxon>
        <taxon>Fungi</taxon>
        <taxon>Dikarya</taxon>
        <taxon>Basidiomycota</taxon>
        <taxon>Agaricomycotina</taxon>
        <taxon>Tremellomycetes</taxon>
        <taxon>Tremellales</taxon>
        <taxon>Cryptococcaceae</taxon>
        <taxon>Cryptococcus</taxon>
        <taxon>Cryptococcus neoformans species complex</taxon>
    </lineage>
</organism>